<gene>
    <name type="primary">tufA</name>
</gene>
<keyword id="KW-0150">Chloroplast</keyword>
<keyword id="KW-0251">Elongation factor</keyword>
<keyword id="KW-0342">GTP-binding</keyword>
<keyword id="KW-0378">Hydrolase</keyword>
<keyword id="KW-0460">Magnesium</keyword>
<keyword id="KW-0479">Metal-binding</keyword>
<keyword id="KW-0547">Nucleotide-binding</keyword>
<keyword id="KW-0934">Plastid</keyword>
<keyword id="KW-0648">Protein biosynthesis</keyword>
<geneLocation type="chloroplast"/>
<organism>
    <name type="scientific">Pleurastrum terricola</name>
    <name type="common">Filamentous green alga</name>
    <name type="synonym">Leptosira terrestris</name>
    <dbReference type="NCBI Taxonomy" id="34116"/>
    <lineage>
        <taxon>Eukaryota</taxon>
        <taxon>Viridiplantae</taxon>
        <taxon>Chlorophyta</taxon>
        <taxon>core chlorophytes</taxon>
        <taxon>Chlorophyceae</taxon>
        <taxon>CS clade</taxon>
        <taxon>Chlamydomonadales</taxon>
        <taxon>Pleurastraceae</taxon>
        <taxon>Pleurastrum</taxon>
    </lineage>
</organism>
<reference key="1">
    <citation type="journal article" date="2007" name="BMC Genomics">
        <title>The chloroplast genome sequence of the green alga Leptosira terrestris: multiple losses of the inverted repeat and extensive genome rearrangements within the Trebouxiophyceae.</title>
        <authorList>
            <person name="de Cambiaire J.-C."/>
            <person name="Otis C."/>
            <person name="Turmel M."/>
            <person name="Lemieux C."/>
        </authorList>
    </citation>
    <scope>NUCLEOTIDE SEQUENCE [LARGE SCALE GENOMIC DNA]</scope>
    <source>
        <strain>CCAP 463/2 / UTEX 333</strain>
    </source>
</reference>
<comment type="function">
    <text evidence="2">GTP hydrolase that promotes the GTP-dependent binding of aminoacyl-tRNA to the A-site of ribosomes during protein biosynthesis.</text>
</comment>
<comment type="catalytic activity">
    <reaction evidence="2">
        <text>GTP + H2O = GDP + phosphate + H(+)</text>
        <dbReference type="Rhea" id="RHEA:19669"/>
        <dbReference type="ChEBI" id="CHEBI:15377"/>
        <dbReference type="ChEBI" id="CHEBI:15378"/>
        <dbReference type="ChEBI" id="CHEBI:37565"/>
        <dbReference type="ChEBI" id="CHEBI:43474"/>
        <dbReference type="ChEBI" id="CHEBI:58189"/>
        <dbReference type="EC" id="3.6.5.3"/>
    </reaction>
    <physiologicalReaction direction="left-to-right" evidence="2">
        <dbReference type="Rhea" id="RHEA:19670"/>
    </physiologicalReaction>
</comment>
<comment type="subcellular location">
    <subcellularLocation>
        <location>Plastid</location>
        <location>Chloroplast</location>
    </subcellularLocation>
</comment>
<comment type="similarity">
    <text evidence="3">Belongs to the TRAFAC class translation factor GTPase superfamily. Classic translation factor GTPase family. EF-Tu/EF-1A subfamily.</text>
</comment>
<name>EFTU_PLETE</name>
<accession>A6YG72</accession>
<feature type="chain" id="PRO_0000337595" description="Elongation factor Tu, chloroplastic">
    <location>
        <begin position="1"/>
        <end position="409"/>
    </location>
</feature>
<feature type="domain" description="tr-type G">
    <location>
        <begin position="10"/>
        <end position="214"/>
    </location>
</feature>
<feature type="region of interest" description="G1" evidence="1">
    <location>
        <begin position="19"/>
        <end position="26"/>
    </location>
</feature>
<feature type="region of interest" description="G2" evidence="1">
    <location>
        <begin position="60"/>
        <end position="64"/>
    </location>
</feature>
<feature type="region of interest" description="G3" evidence="1">
    <location>
        <begin position="81"/>
        <end position="84"/>
    </location>
</feature>
<feature type="region of interest" description="G4" evidence="1">
    <location>
        <begin position="136"/>
        <end position="139"/>
    </location>
</feature>
<feature type="region of interest" description="G5" evidence="1">
    <location>
        <begin position="174"/>
        <end position="176"/>
    </location>
</feature>
<feature type="binding site" evidence="1">
    <location>
        <begin position="19"/>
        <end position="26"/>
    </location>
    <ligand>
        <name>GTP</name>
        <dbReference type="ChEBI" id="CHEBI:37565"/>
    </ligand>
</feature>
<feature type="binding site" evidence="2">
    <location>
        <position position="26"/>
    </location>
    <ligand>
        <name>Mg(2+)</name>
        <dbReference type="ChEBI" id="CHEBI:18420"/>
    </ligand>
</feature>
<feature type="binding site" evidence="1">
    <location>
        <begin position="81"/>
        <end position="85"/>
    </location>
    <ligand>
        <name>GTP</name>
        <dbReference type="ChEBI" id="CHEBI:37565"/>
    </ligand>
</feature>
<feature type="binding site" evidence="1">
    <location>
        <begin position="136"/>
        <end position="139"/>
    </location>
    <ligand>
        <name>GTP</name>
        <dbReference type="ChEBI" id="CHEBI:37565"/>
    </ligand>
</feature>
<evidence type="ECO:0000250" key="1"/>
<evidence type="ECO:0000255" key="2">
    <source>
        <dbReference type="HAMAP-Rule" id="MF_00118"/>
    </source>
</evidence>
<evidence type="ECO:0000305" key="3"/>
<protein>
    <recommendedName>
        <fullName>Elongation factor Tu, chloroplastic</fullName>
        <shortName>EF-Tu</shortName>
        <ecNumber evidence="2">3.6.5.3</ecNumber>
    </recommendedName>
</protein>
<sequence length="409" mass="44891">MARQKFERKKPHVNIGTIGHVDHGKTTLTAAITMAMAARGGGKGKKYDDIDSAPEEKQRGITINTAHVEYETEKRHYAHVDCPGHADYVKNMITGAAQMDGAILVVSGADGPMPQTKEHILLAKQVGVPNVVVFLNKEDQVDDAELLELVELEVRETLDNYEFPGDEIPIVPGSALLALQALSENPEITPGQNPWVDKIFKLMDTVDAYIPTPERDTEKPFLMAVEDVFSITGRGTVATGRVERGSVKVGETIEIVGLRETRTTTVTGLEMFQKTLEESVAGDNVGVLLRGIQKIDIQRGMVLAKPGSITPHTKFTAQVYILTRDEGGRHTPFFAGYRPQFYVRTTDVTGKIETFRTDDDQPTQMVMPGDRIKMEVELIQPIAIEKGMRFAIREGGRTVGAGVVSAIVL</sequence>
<dbReference type="EC" id="3.6.5.3" evidence="2"/>
<dbReference type="EMBL" id="EF506945">
    <property type="protein sequence ID" value="ABO69293.1"/>
    <property type="molecule type" value="Genomic_DNA"/>
</dbReference>
<dbReference type="RefSeq" id="YP_001382149.1">
    <property type="nucleotide sequence ID" value="NC_009681.1"/>
</dbReference>
<dbReference type="SMR" id="A6YG72"/>
<dbReference type="GeneID" id="5383751"/>
<dbReference type="GO" id="GO:0009507">
    <property type="term" value="C:chloroplast"/>
    <property type="evidence" value="ECO:0007669"/>
    <property type="project" value="UniProtKB-SubCell"/>
</dbReference>
<dbReference type="GO" id="GO:0005739">
    <property type="term" value="C:mitochondrion"/>
    <property type="evidence" value="ECO:0007669"/>
    <property type="project" value="TreeGrafter"/>
</dbReference>
<dbReference type="GO" id="GO:0005525">
    <property type="term" value="F:GTP binding"/>
    <property type="evidence" value="ECO:0007669"/>
    <property type="project" value="UniProtKB-UniRule"/>
</dbReference>
<dbReference type="GO" id="GO:0003924">
    <property type="term" value="F:GTPase activity"/>
    <property type="evidence" value="ECO:0007669"/>
    <property type="project" value="InterPro"/>
</dbReference>
<dbReference type="GO" id="GO:0003746">
    <property type="term" value="F:translation elongation factor activity"/>
    <property type="evidence" value="ECO:0007669"/>
    <property type="project" value="UniProtKB-UniRule"/>
</dbReference>
<dbReference type="GO" id="GO:0070125">
    <property type="term" value="P:mitochondrial translational elongation"/>
    <property type="evidence" value="ECO:0007669"/>
    <property type="project" value="TreeGrafter"/>
</dbReference>
<dbReference type="CDD" id="cd01884">
    <property type="entry name" value="EF_Tu"/>
    <property type="match status" value="1"/>
</dbReference>
<dbReference type="CDD" id="cd03697">
    <property type="entry name" value="EFTU_II"/>
    <property type="match status" value="1"/>
</dbReference>
<dbReference type="CDD" id="cd03707">
    <property type="entry name" value="EFTU_III"/>
    <property type="match status" value="1"/>
</dbReference>
<dbReference type="FunFam" id="2.40.30.10:FF:000001">
    <property type="entry name" value="Elongation factor Tu"/>
    <property type="match status" value="1"/>
</dbReference>
<dbReference type="FunFam" id="2.40.30.10:FF:000046">
    <property type="entry name" value="Elongation factor Tu"/>
    <property type="match status" value="1"/>
</dbReference>
<dbReference type="FunFam" id="3.40.50.300:FF:000003">
    <property type="entry name" value="Elongation factor Tu"/>
    <property type="match status" value="1"/>
</dbReference>
<dbReference type="Gene3D" id="3.40.50.300">
    <property type="entry name" value="P-loop containing nucleotide triphosphate hydrolases"/>
    <property type="match status" value="1"/>
</dbReference>
<dbReference type="Gene3D" id="2.40.30.10">
    <property type="entry name" value="Translation factors"/>
    <property type="match status" value="2"/>
</dbReference>
<dbReference type="HAMAP" id="MF_00118_B">
    <property type="entry name" value="EF_Tu_B"/>
    <property type="match status" value="1"/>
</dbReference>
<dbReference type="InterPro" id="IPR041709">
    <property type="entry name" value="EF-Tu_GTP-bd"/>
</dbReference>
<dbReference type="InterPro" id="IPR050055">
    <property type="entry name" value="EF-Tu_GTPase"/>
</dbReference>
<dbReference type="InterPro" id="IPR004161">
    <property type="entry name" value="EFTu-like_2"/>
</dbReference>
<dbReference type="InterPro" id="IPR033720">
    <property type="entry name" value="EFTU_2"/>
</dbReference>
<dbReference type="InterPro" id="IPR031157">
    <property type="entry name" value="G_TR_CS"/>
</dbReference>
<dbReference type="InterPro" id="IPR027417">
    <property type="entry name" value="P-loop_NTPase"/>
</dbReference>
<dbReference type="InterPro" id="IPR005225">
    <property type="entry name" value="Small_GTP-bd"/>
</dbReference>
<dbReference type="InterPro" id="IPR000795">
    <property type="entry name" value="T_Tr_GTP-bd_dom"/>
</dbReference>
<dbReference type="InterPro" id="IPR009000">
    <property type="entry name" value="Transl_B-barrel_sf"/>
</dbReference>
<dbReference type="InterPro" id="IPR009001">
    <property type="entry name" value="Transl_elong_EF1A/Init_IF2_C"/>
</dbReference>
<dbReference type="InterPro" id="IPR004541">
    <property type="entry name" value="Transl_elong_EFTu/EF1A_bac/org"/>
</dbReference>
<dbReference type="InterPro" id="IPR004160">
    <property type="entry name" value="Transl_elong_EFTu/EF1A_C"/>
</dbReference>
<dbReference type="NCBIfam" id="TIGR00485">
    <property type="entry name" value="EF-Tu"/>
    <property type="match status" value="1"/>
</dbReference>
<dbReference type="NCBIfam" id="NF000766">
    <property type="entry name" value="PRK00049.1"/>
    <property type="match status" value="1"/>
</dbReference>
<dbReference type="NCBIfam" id="NF009372">
    <property type="entry name" value="PRK12735.1"/>
    <property type="match status" value="1"/>
</dbReference>
<dbReference type="NCBIfam" id="NF009373">
    <property type="entry name" value="PRK12736.1"/>
    <property type="match status" value="1"/>
</dbReference>
<dbReference type="NCBIfam" id="TIGR00231">
    <property type="entry name" value="small_GTP"/>
    <property type="match status" value="1"/>
</dbReference>
<dbReference type="PANTHER" id="PTHR43721:SF5">
    <property type="entry name" value="ELONGATION FACTOR TU, CHLOROPLASTIC"/>
    <property type="match status" value="1"/>
</dbReference>
<dbReference type="PANTHER" id="PTHR43721">
    <property type="entry name" value="ELONGATION FACTOR TU-RELATED"/>
    <property type="match status" value="1"/>
</dbReference>
<dbReference type="Pfam" id="PF00009">
    <property type="entry name" value="GTP_EFTU"/>
    <property type="match status" value="1"/>
</dbReference>
<dbReference type="Pfam" id="PF03144">
    <property type="entry name" value="GTP_EFTU_D2"/>
    <property type="match status" value="1"/>
</dbReference>
<dbReference type="Pfam" id="PF03143">
    <property type="entry name" value="GTP_EFTU_D3"/>
    <property type="match status" value="1"/>
</dbReference>
<dbReference type="PRINTS" id="PR00315">
    <property type="entry name" value="ELONGATNFCT"/>
</dbReference>
<dbReference type="SUPFAM" id="SSF50465">
    <property type="entry name" value="EF-Tu/eEF-1alpha/eIF2-gamma C-terminal domain"/>
    <property type="match status" value="1"/>
</dbReference>
<dbReference type="SUPFAM" id="SSF52540">
    <property type="entry name" value="P-loop containing nucleoside triphosphate hydrolases"/>
    <property type="match status" value="1"/>
</dbReference>
<dbReference type="SUPFAM" id="SSF50447">
    <property type="entry name" value="Translation proteins"/>
    <property type="match status" value="1"/>
</dbReference>
<dbReference type="PROSITE" id="PS00301">
    <property type="entry name" value="G_TR_1"/>
    <property type="match status" value="1"/>
</dbReference>
<dbReference type="PROSITE" id="PS51722">
    <property type="entry name" value="G_TR_2"/>
    <property type="match status" value="1"/>
</dbReference>
<proteinExistence type="inferred from homology"/>